<evidence type="ECO:0000250" key="1">
    <source>
        <dbReference type="UniProtKB" id="Q9HAW7"/>
    </source>
</evidence>
<evidence type="ECO:0000255" key="2"/>
<evidence type="ECO:0000269" key="3">
    <source>
    </source>
</evidence>
<evidence type="ECO:0000305" key="4"/>
<evidence type="ECO:0000312" key="5">
    <source>
        <dbReference type="MGI" id="MGI:3032636"/>
    </source>
</evidence>
<sequence>MAPADFPASLPLCVCLLLASGLAQAGRLLVVPMDGSHWFTMQTVVEKLLHKGHEVVVVVPEVSWQLTKPLNFVVKTYAVSHTQEDLNREFKIFIDAQWKSQQEGGILPLLDSPAKGFFELLFSHCRSLFNDKKLVEYLKQTSFDAVFLDPFDVCGLTVAKYFSLPSVVFSRGIFCHYLEDAAQCPSPPSYIPRMLLKFTDTMTFKERTRNLLAYMGERAFCHKFFKSAADIASEVLQTPVTMTDLFSPVSIWLLRTDFVLEFPRPVMPNVIYIGGINCHQGKPLSKEFEAYVNASGEHGIVVFSLGSMVSEIPEKKAMEIAEALGRIPQTVLWRYTGTRPSNLAKNTILVKWLPQNDLLGHPKTRAFITHSGSHGIYEGICNGVPMVMMPLFGDQMDNAKRMETRGAGVTLNVLEMTADDLENALKTVINNKSYKENIMRLSSLHKDRPIEPLDLAVFWVEYVMRHKGAPHLRPAAHDLTWYQYHSLDVIGFLLAIVLTVVFIVFKCCAYGCRKCFGGKGRVKKSHKSKTH</sequence>
<feature type="signal peptide" evidence="2">
    <location>
        <begin position="1"/>
        <end position="25"/>
    </location>
</feature>
<feature type="chain" id="PRO_0000269994" description="UDP-glucuronosyltransferase 1A7">
    <location>
        <begin position="26"/>
        <end position="531"/>
    </location>
</feature>
<feature type="transmembrane region" description="Helical" evidence="2">
    <location>
        <begin position="489"/>
        <end position="509"/>
    </location>
</feature>
<feature type="glycosylation site" description="N-linked (GlcNAc...) asparagine" evidence="2">
    <location>
        <position position="293"/>
    </location>
</feature>
<feature type="glycosylation site" description="N-linked (GlcNAc...) asparagine" evidence="2">
    <location>
        <position position="431"/>
    </location>
</feature>
<keyword id="KW-0025">Alternative splicing</keyword>
<keyword id="KW-0256">Endoplasmic reticulum</keyword>
<keyword id="KW-0325">Glycoprotein</keyword>
<keyword id="KW-0328">Glycosyltransferase</keyword>
<keyword id="KW-0443">Lipid metabolism</keyword>
<keyword id="KW-0472">Membrane</keyword>
<keyword id="KW-1185">Reference proteome</keyword>
<keyword id="KW-0732">Signal</keyword>
<keyword id="KW-0808">Transferase</keyword>
<keyword id="KW-0812">Transmembrane</keyword>
<keyword id="KW-1133">Transmembrane helix</keyword>
<gene>
    <name evidence="5" type="primary">Ugt1a7</name>
    <name type="synonym">Ugt1a7c</name>
</gene>
<dbReference type="EC" id="2.4.1.17" evidence="1"/>
<dbReference type="EMBL" id="AY227199">
    <property type="protein sequence ID" value="AAP48598.1"/>
    <property type="molecule type" value="mRNA"/>
</dbReference>
<dbReference type="EMBL" id="AK128918">
    <property type="protein sequence ID" value="BAC87656.1"/>
    <property type="molecule type" value="mRNA"/>
</dbReference>
<dbReference type="EMBL" id="AK144599">
    <property type="protein sequence ID" value="BAE25958.1"/>
    <property type="molecule type" value="mRNA"/>
</dbReference>
<dbReference type="EMBL" id="AK153157">
    <property type="protein sequence ID" value="BAE31767.1"/>
    <property type="molecule type" value="mRNA"/>
</dbReference>
<dbReference type="EMBL" id="AK165465">
    <property type="protein sequence ID" value="BAE38202.1"/>
    <property type="molecule type" value="mRNA"/>
</dbReference>
<dbReference type="EMBL" id="BC141205">
    <property type="protein sequence ID" value="AAI41206.1"/>
    <property type="molecule type" value="mRNA"/>
</dbReference>
<dbReference type="EMBL" id="BC141206">
    <property type="protein sequence ID" value="AAI41207.1"/>
    <property type="molecule type" value="mRNA"/>
</dbReference>
<dbReference type="CCDS" id="CCDS15139.1">
    <molecule id="Q6ZQM8-1"/>
</dbReference>
<dbReference type="RefSeq" id="NP_964004.1">
    <molecule id="Q6ZQM8-1"/>
    <property type="nucleotide sequence ID" value="NM_201642.4"/>
</dbReference>
<dbReference type="SMR" id="Q6ZQM8"/>
<dbReference type="BioGRID" id="239927">
    <property type="interactions" value="2"/>
</dbReference>
<dbReference type="FunCoup" id="Q6ZQM8">
    <property type="interactions" value="718"/>
</dbReference>
<dbReference type="STRING" id="10090.ENSMUSP00000108764"/>
<dbReference type="CAZy" id="GT1">
    <property type="family name" value="Glycosyltransferase Family 1"/>
</dbReference>
<dbReference type="GlyCosmos" id="Q6ZQM8">
    <property type="glycosylation" value="2 sites, No reported glycans"/>
</dbReference>
<dbReference type="GlyGen" id="Q6ZQM8">
    <property type="glycosylation" value="2 sites"/>
</dbReference>
<dbReference type="iPTMnet" id="Q6ZQM8"/>
<dbReference type="MetOSite" id="Q6ZQM8"/>
<dbReference type="PhosphoSitePlus" id="Q6ZQM8"/>
<dbReference type="SwissPalm" id="Q6ZQM8"/>
<dbReference type="jPOST" id="Q6ZQM8"/>
<dbReference type="PaxDb" id="10090-ENSMUSP00000058683"/>
<dbReference type="PeptideAtlas" id="Q6ZQM8"/>
<dbReference type="ProteomicsDB" id="275377">
    <molecule id="Q6ZQM8-1"/>
</dbReference>
<dbReference type="Pumba" id="Q6ZQM8"/>
<dbReference type="DNASU" id="394432"/>
<dbReference type="Ensembl" id="ENSMUST00000058237.14">
    <molecule id="Q6ZQM8-1"/>
    <property type="protein sequence ID" value="ENSMUSP00000058683.8"/>
    <property type="gene ID" value="ENSMUSG00000090124.8"/>
</dbReference>
<dbReference type="GeneID" id="394432"/>
<dbReference type="KEGG" id="mmu:394432"/>
<dbReference type="UCSC" id="uc007byc.1">
    <molecule id="Q6ZQM8-1"/>
    <property type="organism name" value="mouse"/>
</dbReference>
<dbReference type="AGR" id="MGI:3032636"/>
<dbReference type="CTD" id="394432"/>
<dbReference type="MGI" id="MGI:3032636">
    <property type="gene designation" value="Ugt1a7c"/>
</dbReference>
<dbReference type="VEuPathDB" id="HostDB:ENSMUSG00000090124"/>
<dbReference type="eggNOG" id="KOG1192">
    <property type="taxonomic scope" value="Eukaryota"/>
</dbReference>
<dbReference type="GeneTree" id="ENSGT00940000163820"/>
<dbReference type="HOGENOM" id="CLU_012949_3_0_1"/>
<dbReference type="InParanoid" id="Q6ZQM8"/>
<dbReference type="OMA" id="WASWICC"/>
<dbReference type="OrthoDB" id="42360at9989"/>
<dbReference type="PhylomeDB" id="Q6ZQM8"/>
<dbReference type="TreeFam" id="TF315472"/>
<dbReference type="Reactome" id="R-MMU-156588">
    <property type="pathway name" value="Glucuronidation"/>
</dbReference>
<dbReference type="Reactome" id="R-MMU-9749641">
    <property type="pathway name" value="Aspirin ADME"/>
</dbReference>
<dbReference type="Reactome" id="R-MMU-9753281">
    <property type="pathway name" value="Paracetamol ADME"/>
</dbReference>
<dbReference type="BioGRID-ORCS" id="394432">
    <property type="hits" value="6 hits in 71 CRISPR screens"/>
</dbReference>
<dbReference type="PRO" id="PR:Q6ZQM8"/>
<dbReference type="Proteomes" id="UP000000589">
    <property type="component" value="Chromosome 1"/>
</dbReference>
<dbReference type="RNAct" id="Q6ZQM8">
    <property type="molecule type" value="protein"/>
</dbReference>
<dbReference type="Bgee" id="ENSMUSG00000090124">
    <property type="expression patterns" value="Expressed in proximal tubule and 56 other cell types or tissues"/>
</dbReference>
<dbReference type="ExpressionAtlas" id="Q6ZQM8">
    <property type="expression patterns" value="baseline and differential"/>
</dbReference>
<dbReference type="GO" id="GO:0005789">
    <property type="term" value="C:endoplasmic reticulum membrane"/>
    <property type="evidence" value="ECO:0007669"/>
    <property type="project" value="UniProtKB-SubCell"/>
</dbReference>
<dbReference type="GO" id="GO:0015020">
    <property type="term" value="F:glucuronosyltransferase activity"/>
    <property type="evidence" value="ECO:0000250"/>
    <property type="project" value="UniProtKB"/>
</dbReference>
<dbReference type="GO" id="GO:0008210">
    <property type="term" value="P:estrogen metabolic process"/>
    <property type="evidence" value="ECO:0000250"/>
    <property type="project" value="UniProtKB"/>
</dbReference>
<dbReference type="CDD" id="cd03784">
    <property type="entry name" value="GT1_Gtf-like"/>
    <property type="match status" value="1"/>
</dbReference>
<dbReference type="FunFam" id="3.40.50.2000:FF:000001">
    <property type="entry name" value="UDP-glucuronosyltransferase"/>
    <property type="match status" value="1"/>
</dbReference>
<dbReference type="FunFam" id="3.40.50.2000:FF:000092">
    <property type="entry name" value="UDP-glucuronosyltransferase"/>
    <property type="match status" value="1"/>
</dbReference>
<dbReference type="Gene3D" id="3.40.50.2000">
    <property type="entry name" value="Glycogen Phosphorylase B"/>
    <property type="match status" value="2"/>
</dbReference>
<dbReference type="InterPro" id="IPR050271">
    <property type="entry name" value="UDP-glycosyltransferase"/>
</dbReference>
<dbReference type="InterPro" id="IPR002213">
    <property type="entry name" value="UDP_glucos_trans"/>
</dbReference>
<dbReference type="InterPro" id="IPR035595">
    <property type="entry name" value="UDP_glycos_trans_CS"/>
</dbReference>
<dbReference type="PANTHER" id="PTHR48043">
    <property type="entry name" value="EG:EG0003.4 PROTEIN-RELATED"/>
    <property type="match status" value="1"/>
</dbReference>
<dbReference type="PANTHER" id="PTHR48043:SF161">
    <property type="entry name" value="UDP GLUCURONOSYLTRANSFERASE FAMILY 1 MEMBER A1"/>
    <property type="match status" value="1"/>
</dbReference>
<dbReference type="Pfam" id="PF00201">
    <property type="entry name" value="UDPGT"/>
    <property type="match status" value="1"/>
</dbReference>
<dbReference type="SUPFAM" id="SSF53756">
    <property type="entry name" value="UDP-Glycosyltransferase/glycogen phosphorylase"/>
    <property type="match status" value="1"/>
</dbReference>
<dbReference type="PROSITE" id="PS00375">
    <property type="entry name" value="UDPGT"/>
    <property type="match status" value="1"/>
</dbReference>
<proteinExistence type="evidence at protein level"/>
<organism>
    <name type="scientific">Mus musculus</name>
    <name type="common">Mouse</name>
    <dbReference type="NCBI Taxonomy" id="10090"/>
    <lineage>
        <taxon>Eukaryota</taxon>
        <taxon>Metazoa</taxon>
        <taxon>Chordata</taxon>
        <taxon>Craniata</taxon>
        <taxon>Vertebrata</taxon>
        <taxon>Euteleostomi</taxon>
        <taxon>Mammalia</taxon>
        <taxon>Eutheria</taxon>
        <taxon>Euarchontoglires</taxon>
        <taxon>Glires</taxon>
        <taxon>Rodentia</taxon>
        <taxon>Myomorpha</taxon>
        <taxon>Muroidea</taxon>
        <taxon>Muridae</taxon>
        <taxon>Murinae</taxon>
        <taxon>Mus</taxon>
        <taxon>Mus</taxon>
    </lineage>
</organism>
<accession>Q6ZQM8</accession>
<accession>B2RUL6</accession>
<accession>Q6XL45</accession>
<reference key="1">
    <citation type="journal article" date="2004" name="Genome Res.">
        <title>Multiple variable first exons: a mechanism for cell- and tissue-specific gene regulation.</title>
        <authorList>
            <person name="Zhang T."/>
            <person name="Haws P."/>
            <person name="Wu Q."/>
        </authorList>
    </citation>
    <scope>NUCLEOTIDE SEQUENCE [MRNA]</scope>
    <scope>TISSUE SPECIFICITY</scope>
    <source>
        <tissue>Kidney</tissue>
    </source>
</reference>
<reference key="2">
    <citation type="journal article" date="2005" name="Science">
        <title>The transcriptional landscape of the mammalian genome.</title>
        <authorList>
            <person name="Carninci P."/>
            <person name="Kasukawa T."/>
            <person name="Katayama S."/>
            <person name="Gough J."/>
            <person name="Frith M.C."/>
            <person name="Maeda N."/>
            <person name="Oyama R."/>
            <person name="Ravasi T."/>
            <person name="Lenhard B."/>
            <person name="Wells C."/>
            <person name="Kodzius R."/>
            <person name="Shimokawa K."/>
            <person name="Bajic V.B."/>
            <person name="Brenner S.E."/>
            <person name="Batalov S."/>
            <person name="Forrest A.R."/>
            <person name="Zavolan M."/>
            <person name="Davis M.J."/>
            <person name="Wilming L.G."/>
            <person name="Aidinis V."/>
            <person name="Allen J.E."/>
            <person name="Ambesi-Impiombato A."/>
            <person name="Apweiler R."/>
            <person name="Aturaliya R.N."/>
            <person name="Bailey T.L."/>
            <person name="Bansal M."/>
            <person name="Baxter L."/>
            <person name="Beisel K.W."/>
            <person name="Bersano T."/>
            <person name="Bono H."/>
            <person name="Chalk A.M."/>
            <person name="Chiu K.P."/>
            <person name="Choudhary V."/>
            <person name="Christoffels A."/>
            <person name="Clutterbuck D.R."/>
            <person name="Crowe M.L."/>
            <person name="Dalla E."/>
            <person name="Dalrymple B.P."/>
            <person name="de Bono B."/>
            <person name="Della Gatta G."/>
            <person name="di Bernardo D."/>
            <person name="Down T."/>
            <person name="Engstrom P."/>
            <person name="Fagiolini M."/>
            <person name="Faulkner G."/>
            <person name="Fletcher C.F."/>
            <person name="Fukushima T."/>
            <person name="Furuno M."/>
            <person name="Futaki S."/>
            <person name="Gariboldi M."/>
            <person name="Georgii-Hemming P."/>
            <person name="Gingeras T.R."/>
            <person name="Gojobori T."/>
            <person name="Green R.E."/>
            <person name="Gustincich S."/>
            <person name="Harbers M."/>
            <person name="Hayashi Y."/>
            <person name="Hensch T.K."/>
            <person name="Hirokawa N."/>
            <person name="Hill D."/>
            <person name="Huminiecki L."/>
            <person name="Iacono M."/>
            <person name="Ikeo K."/>
            <person name="Iwama A."/>
            <person name="Ishikawa T."/>
            <person name="Jakt M."/>
            <person name="Kanapin A."/>
            <person name="Katoh M."/>
            <person name="Kawasawa Y."/>
            <person name="Kelso J."/>
            <person name="Kitamura H."/>
            <person name="Kitano H."/>
            <person name="Kollias G."/>
            <person name="Krishnan S.P."/>
            <person name="Kruger A."/>
            <person name="Kummerfeld S.K."/>
            <person name="Kurochkin I.V."/>
            <person name="Lareau L.F."/>
            <person name="Lazarevic D."/>
            <person name="Lipovich L."/>
            <person name="Liu J."/>
            <person name="Liuni S."/>
            <person name="McWilliam S."/>
            <person name="Madan Babu M."/>
            <person name="Madera M."/>
            <person name="Marchionni L."/>
            <person name="Matsuda H."/>
            <person name="Matsuzawa S."/>
            <person name="Miki H."/>
            <person name="Mignone F."/>
            <person name="Miyake S."/>
            <person name="Morris K."/>
            <person name="Mottagui-Tabar S."/>
            <person name="Mulder N."/>
            <person name="Nakano N."/>
            <person name="Nakauchi H."/>
            <person name="Ng P."/>
            <person name="Nilsson R."/>
            <person name="Nishiguchi S."/>
            <person name="Nishikawa S."/>
            <person name="Nori F."/>
            <person name="Ohara O."/>
            <person name="Okazaki Y."/>
            <person name="Orlando V."/>
            <person name="Pang K.C."/>
            <person name="Pavan W.J."/>
            <person name="Pavesi G."/>
            <person name="Pesole G."/>
            <person name="Petrovsky N."/>
            <person name="Piazza S."/>
            <person name="Reed J."/>
            <person name="Reid J.F."/>
            <person name="Ring B.Z."/>
            <person name="Ringwald M."/>
            <person name="Rost B."/>
            <person name="Ruan Y."/>
            <person name="Salzberg S.L."/>
            <person name="Sandelin A."/>
            <person name="Schneider C."/>
            <person name="Schoenbach C."/>
            <person name="Sekiguchi K."/>
            <person name="Semple C.A."/>
            <person name="Seno S."/>
            <person name="Sessa L."/>
            <person name="Sheng Y."/>
            <person name="Shibata Y."/>
            <person name="Shimada H."/>
            <person name="Shimada K."/>
            <person name="Silva D."/>
            <person name="Sinclair B."/>
            <person name="Sperling S."/>
            <person name="Stupka E."/>
            <person name="Sugiura K."/>
            <person name="Sultana R."/>
            <person name="Takenaka Y."/>
            <person name="Taki K."/>
            <person name="Tammoja K."/>
            <person name="Tan S.L."/>
            <person name="Tang S."/>
            <person name="Taylor M.S."/>
            <person name="Tegner J."/>
            <person name="Teichmann S.A."/>
            <person name="Ueda H.R."/>
            <person name="van Nimwegen E."/>
            <person name="Verardo R."/>
            <person name="Wei C.L."/>
            <person name="Yagi K."/>
            <person name="Yamanishi H."/>
            <person name="Zabarovsky E."/>
            <person name="Zhu S."/>
            <person name="Zimmer A."/>
            <person name="Hide W."/>
            <person name="Bult C."/>
            <person name="Grimmond S.M."/>
            <person name="Teasdale R.D."/>
            <person name="Liu E.T."/>
            <person name="Brusic V."/>
            <person name="Quackenbush J."/>
            <person name="Wahlestedt C."/>
            <person name="Mattick J.S."/>
            <person name="Hume D.A."/>
            <person name="Kai C."/>
            <person name="Sasaki D."/>
            <person name="Tomaru Y."/>
            <person name="Fukuda S."/>
            <person name="Kanamori-Katayama M."/>
            <person name="Suzuki M."/>
            <person name="Aoki J."/>
            <person name="Arakawa T."/>
            <person name="Iida J."/>
            <person name="Imamura K."/>
            <person name="Itoh M."/>
            <person name="Kato T."/>
            <person name="Kawaji H."/>
            <person name="Kawagashira N."/>
            <person name="Kawashima T."/>
            <person name="Kojima M."/>
            <person name="Kondo S."/>
            <person name="Konno H."/>
            <person name="Nakano K."/>
            <person name="Ninomiya N."/>
            <person name="Nishio T."/>
            <person name="Okada M."/>
            <person name="Plessy C."/>
            <person name="Shibata K."/>
            <person name="Shiraki T."/>
            <person name="Suzuki S."/>
            <person name="Tagami M."/>
            <person name="Waki K."/>
            <person name="Watahiki A."/>
            <person name="Okamura-Oho Y."/>
            <person name="Suzuki H."/>
            <person name="Kawai J."/>
            <person name="Hayashizaki Y."/>
        </authorList>
    </citation>
    <scope>NUCLEOTIDE SEQUENCE [LARGE SCALE MRNA]</scope>
    <source>
        <strain>C57BL/6J</strain>
        <tissue>Bone marrow</tissue>
        <tissue>Kidney</tissue>
        <tissue>Lung</tissue>
    </source>
</reference>
<reference key="3">
    <citation type="journal article" date="2004" name="Genome Res.">
        <title>The status, quality, and expansion of the NIH full-length cDNA project: the Mammalian Gene Collection (MGC).</title>
        <authorList>
            <consortium name="The MGC Project Team"/>
        </authorList>
    </citation>
    <scope>NUCLEOTIDE SEQUENCE [LARGE SCALE MRNA]</scope>
    <source>
        <tissue>Testis</tissue>
    </source>
</reference>
<reference key="4">
    <citation type="journal article" date="2010" name="Cell">
        <title>A tissue-specific atlas of mouse protein phosphorylation and expression.</title>
        <authorList>
            <person name="Huttlin E.L."/>
            <person name="Jedrychowski M.P."/>
            <person name="Elias J.E."/>
            <person name="Goswami T."/>
            <person name="Rad R."/>
            <person name="Beausoleil S.A."/>
            <person name="Villen J."/>
            <person name="Haas W."/>
            <person name="Sowa M.E."/>
            <person name="Gygi S.P."/>
        </authorList>
    </citation>
    <scope>IDENTIFICATION BY MASS SPECTROMETRY [LARGE SCALE ANALYSIS]</scope>
    <source>
        <tissue>Kidney</tissue>
        <tissue>Spleen</tissue>
        <tissue>Testis</tissue>
    </source>
</reference>
<comment type="function">
    <text evidence="1">UDP-glucuronosyltransferase (UGT) that catalyzes phase II biotransformation reactions in which lipophilic substrates are conjugated with glucuronic acid to increase the metabolite's water solubility, thereby facilitating excretion into either the urine or bile. Essential for the elimination and detoxification of drugs, xenobiotics and endogenous compounds. Catalyzes the glucuronidation of endogenous estrogen hormone epiestradiol. Involved in the glucuronidation of F2-isoprostane (5-epi-5-F2t-IsoP). Involved in the glucuronidation of the phytochemical ferulic acid at the carboxylic acid group. Also catalyzes the glucuronidation of the isoflavones genistein, daidzein, glycitein, formononetin, biochanin A and prunetin, which are phytoestrogens with anticancer and cardiovascular properties. Involved in the glucuronidation of the AGTR1 angiotensin receptor antagonist caderastan, a drug which can inhibit the effect of angiotensin II. Involved in the biotransformation of 7-ethyl-10-hydroxycamptothecin (SN-38), the pharmacologically active metabolite of the anticancer drug irinotecan. Also metabolizes mycophenolate, an immunosuppressive agent.</text>
</comment>
<comment type="catalytic activity">
    <reaction evidence="1">
        <text>glucuronate acceptor + UDP-alpha-D-glucuronate = acceptor beta-D-glucuronoside + UDP + H(+)</text>
        <dbReference type="Rhea" id="RHEA:21032"/>
        <dbReference type="ChEBI" id="CHEBI:15378"/>
        <dbReference type="ChEBI" id="CHEBI:58052"/>
        <dbReference type="ChEBI" id="CHEBI:58223"/>
        <dbReference type="ChEBI" id="CHEBI:132367"/>
        <dbReference type="ChEBI" id="CHEBI:132368"/>
        <dbReference type="EC" id="2.4.1.17"/>
    </reaction>
    <physiologicalReaction direction="left-to-right" evidence="1">
        <dbReference type="Rhea" id="RHEA:21033"/>
    </physiologicalReaction>
</comment>
<comment type="catalytic activity">
    <reaction evidence="1">
        <text>17alpha-estradiol + UDP-alpha-D-glucuronate = 17alpha-estradiol 3-O-(beta-D-glucuronate) + UDP + H(+)</text>
        <dbReference type="Rhea" id="RHEA:52868"/>
        <dbReference type="ChEBI" id="CHEBI:15378"/>
        <dbReference type="ChEBI" id="CHEBI:17160"/>
        <dbReference type="ChEBI" id="CHEBI:57529"/>
        <dbReference type="ChEBI" id="CHEBI:58052"/>
        <dbReference type="ChEBI" id="CHEBI:58223"/>
    </reaction>
    <physiologicalReaction direction="left-to-right" evidence="1">
        <dbReference type="Rhea" id="RHEA:52869"/>
    </physiologicalReaction>
</comment>
<comment type="catalytic activity">
    <reaction evidence="1">
        <text>prunetin + UDP-alpha-D-glucuronate = prunetin-5-O-beta-D-glucuronide + UDP</text>
        <dbReference type="Rhea" id="RHEA:63612"/>
        <dbReference type="ChEBI" id="CHEBI:58052"/>
        <dbReference type="ChEBI" id="CHEBI:58223"/>
        <dbReference type="ChEBI" id="CHEBI:147403"/>
        <dbReference type="ChEBI" id="CHEBI:147405"/>
    </reaction>
    <physiologicalReaction direction="left-to-right" evidence="1">
        <dbReference type="Rhea" id="RHEA:63613"/>
    </physiologicalReaction>
</comment>
<comment type="catalytic activity">
    <reaction evidence="1">
        <text>5-epi-5-F2t-IsoP + UDP-alpha-D-glucuronate = 5-epi-5-F2t-IsoP-glucuronide + UDP + H(+)</text>
        <dbReference type="Rhea" id="RHEA:79911"/>
        <dbReference type="ChEBI" id="CHEBI:15378"/>
        <dbReference type="ChEBI" id="CHEBI:58052"/>
        <dbReference type="ChEBI" id="CHEBI:58223"/>
        <dbReference type="ChEBI" id="CHEBI:229787"/>
        <dbReference type="ChEBI" id="CHEBI:229788"/>
    </reaction>
    <physiologicalReaction direction="left-to-right" evidence="1">
        <dbReference type="Rhea" id="RHEA:79912"/>
    </physiologicalReaction>
</comment>
<comment type="catalytic activity">
    <reaction evidence="1">
        <text>(E)-ferulate + UDP-alpha-D-glucuronate = (E)-ferulic acid beta-D-glucuronate ester + UDP</text>
        <dbReference type="Rhea" id="RHEA:79955"/>
        <dbReference type="ChEBI" id="CHEBI:29749"/>
        <dbReference type="ChEBI" id="CHEBI:58052"/>
        <dbReference type="ChEBI" id="CHEBI:58223"/>
        <dbReference type="ChEBI" id="CHEBI:231332"/>
    </reaction>
    <physiologicalReaction direction="left-to-right" evidence="1">
        <dbReference type="Rhea" id="RHEA:79956"/>
    </physiologicalReaction>
</comment>
<comment type="catalytic activity">
    <reaction evidence="1">
        <text>candesartan + UDP-alpha-D-glucuronate = candesartan O-beta-D-glucuronoside + UDP</text>
        <dbReference type="Rhea" id="RHEA:63724"/>
        <dbReference type="ChEBI" id="CHEBI:58052"/>
        <dbReference type="ChEBI" id="CHEBI:58223"/>
        <dbReference type="ChEBI" id="CHEBI:149509"/>
        <dbReference type="ChEBI" id="CHEBI:149522"/>
    </reaction>
    <physiologicalReaction direction="left-to-right" evidence="1">
        <dbReference type="Rhea" id="RHEA:63725"/>
    </physiologicalReaction>
</comment>
<comment type="catalytic activity">
    <reaction evidence="1">
        <text>SN-38 + UDP-alpha-D-glucuronate = SN-38 O-beta-D-glucuronide + UDP + H(+)</text>
        <dbReference type="Rhea" id="RHEA:63696"/>
        <dbReference type="ChEBI" id="CHEBI:8988"/>
        <dbReference type="ChEBI" id="CHEBI:15378"/>
        <dbReference type="ChEBI" id="CHEBI:58052"/>
        <dbReference type="ChEBI" id="CHEBI:58223"/>
        <dbReference type="ChEBI" id="CHEBI:149482"/>
    </reaction>
    <physiologicalReaction direction="left-to-right" evidence="1">
        <dbReference type="Rhea" id="RHEA:63697"/>
    </physiologicalReaction>
</comment>
<comment type="catalytic activity">
    <reaction evidence="1">
        <text>mycophenolate + UDP-alpha-D-glucuronate = mycophenolate 7-O-beta-D-glucuronide + UDP + H(+)</text>
        <dbReference type="Rhea" id="RHEA:63704"/>
        <dbReference type="ChEBI" id="CHEBI:15378"/>
        <dbReference type="ChEBI" id="CHEBI:58052"/>
        <dbReference type="ChEBI" id="CHEBI:58223"/>
        <dbReference type="ChEBI" id="CHEBI:62932"/>
        <dbReference type="ChEBI" id="CHEBI:149486"/>
    </reaction>
    <physiologicalReaction direction="left-to-right" evidence="1">
        <dbReference type="Rhea" id="RHEA:63705"/>
    </physiologicalReaction>
</comment>
<comment type="subunit">
    <text evidence="1">Homodimer. Homooligomer. Interacts with UGT1A1, UGT1A3, UGT1A4, UGT1A6, UGT1A8, UGT1A9 and UGT1A10 to form heterodimers.</text>
</comment>
<comment type="subcellular location">
    <subcellularLocation>
        <location evidence="1">Endoplasmic reticulum membrane</location>
        <topology evidence="2">Single-pass membrane protein</topology>
    </subcellularLocation>
</comment>
<comment type="alternative products">
    <event type="alternative splicing"/>
    <isoform>
        <id>Q6ZQM8-1</id>
        <name>1</name>
        <sequence type="displayed"/>
    </isoform>
    <text evidence="1">UGT1A7 is one of the isoforms produced at the UGT1A complex locus. The UGT1A complex locus produces different isoforms based on alternative use of promoters, first exons and terminal exons.</text>
</comment>
<comment type="tissue specificity">
    <text evidence="3">Widely expressed with highest levels detected in colon and kidney.</text>
</comment>
<comment type="similarity">
    <text evidence="4">Belongs to the UDP-glycosyltransferase family.</text>
</comment>
<name>UD17_MOUSE</name>
<protein>
    <recommendedName>
        <fullName evidence="1">UDP-glucuronosyltransferase 1A7</fullName>
        <shortName evidence="1">UGT1A7</shortName>
        <ecNumber evidence="1">2.4.1.17</ecNumber>
    </recommendedName>
    <alternativeName>
        <fullName>UDP-glucuronosyltransferase 1-7C</fullName>
        <shortName>UDPGT 1-7C</shortName>
        <shortName>UGT1*7C</shortName>
        <shortName>UGT1-07C</shortName>
        <shortName>UGT1.7C</shortName>
    </alternativeName>
    <alternativeName>
        <fullName>UDP-glucuronosyltransferase 1A7C</fullName>
    </alternativeName>
</protein>